<reference key="1">
    <citation type="journal article" date="2006" name="Nat. Genet.">
        <title>The multidrug-resistant human pathogen Clostridium difficile has a highly mobile, mosaic genome.</title>
        <authorList>
            <person name="Sebaihia M."/>
            <person name="Wren B.W."/>
            <person name="Mullany P."/>
            <person name="Fairweather N.F."/>
            <person name="Minton N."/>
            <person name="Stabler R."/>
            <person name="Thomson N.R."/>
            <person name="Roberts A.P."/>
            <person name="Cerdeno-Tarraga A.M."/>
            <person name="Wang H."/>
            <person name="Holden M.T.G."/>
            <person name="Wright A."/>
            <person name="Churcher C."/>
            <person name="Quail M.A."/>
            <person name="Baker S."/>
            <person name="Bason N."/>
            <person name="Brooks K."/>
            <person name="Chillingworth T."/>
            <person name="Cronin A."/>
            <person name="Davis P."/>
            <person name="Dowd L."/>
            <person name="Fraser A."/>
            <person name="Feltwell T."/>
            <person name="Hance Z."/>
            <person name="Holroyd S."/>
            <person name="Jagels K."/>
            <person name="Moule S."/>
            <person name="Mungall K."/>
            <person name="Price C."/>
            <person name="Rabbinowitsch E."/>
            <person name="Sharp S."/>
            <person name="Simmonds M."/>
            <person name="Stevens K."/>
            <person name="Unwin L."/>
            <person name="Whithead S."/>
            <person name="Dupuy B."/>
            <person name="Dougan G."/>
            <person name="Barrell B."/>
            <person name="Parkhill J."/>
        </authorList>
    </citation>
    <scope>NUCLEOTIDE SEQUENCE [LARGE SCALE GENOMIC DNA]</scope>
    <source>
        <strain>630</strain>
    </source>
</reference>
<dbReference type="EC" id="4.2.1.33" evidence="1"/>
<dbReference type="EMBL" id="AM180355">
    <property type="protein sequence ID" value="CAJ67832.1"/>
    <property type="molecule type" value="Genomic_DNA"/>
</dbReference>
<dbReference type="RefSeq" id="WP_003437092.1">
    <property type="nucleotide sequence ID" value="NZ_JAUPES010000032.1"/>
</dbReference>
<dbReference type="RefSeq" id="YP_001087472.1">
    <property type="nucleotide sequence ID" value="NC_009089.1"/>
</dbReference>
<dbReference type="SMR" id="Q18AJ1"/>
<dbReference type="STRING" id="272563.CD630_09910"/>
<dbReference type="EnsemblBacteria" id="CAJ67832">
    <property type="protein sequence ID" value="CAJ67832"/>
    <property type="gene ID" value="CD630_09910"/>
</dbReference>
<dbReference type="GeneID" id="66353418"/>
<dbReference type="KEGG" id="cdf:CD630_09910"/>
<dbReference type="KEGG" id="pdc:CDIF630_01127"/>
<dbReference type="PATRIC" id="fig|272563.120.peg.1030"/>
<dbReference type="eggNOG" id="COG0066">
    <property type="taxonomic scope" value="Bacteria"/>
</dbReference>
<dbReference type="OrthoDB" id="9777465at2"/>
<dbReference type="PhylomeDB" id="Q18AJ1"/>
<dbReference type="BioCyc" id="PDIF272563:G12WB-1106-MONOMER"/>
<dbReference type="UniPathway" id="UPA00048">
    <property type="reaction ID" value="UER00071"/>
</dbReference>
<dbReference type="Proteomes" id="UP000001978">
    <property type="component" value="Chromosome"/>
</dbReference>
<dbReference type="GO" id="GO:0003861">
    <property type="term" value="F:3-isopropylmalate dehydratase activity"/>
    <property type="evidence" value="ECO:0007669"/>
    <property type="project" value="UniProtKB-UniRule"/>
</dbReference>
<dbReference type="GO" id="GO:0009098">
    <property type="term" value="P:L-leucine biosynthetic process"/>
    <property type="evidence" value="ECO:0007669"/>
    <property type="project" value="UniProtKB-UniRule"/>
</dbReference>
<dbReference type="CDD" id="cd01577">
    <property type="entry name" value="IPMI_Swivel"/>
    <property type="match status" value="1"/>
</dbReference>
<dbReference type="FunFam" id="3.20.19.10:FF:000007">
    <property type="entry name" value="Isopropylmalate/citramalate isomerase small subunit"/>
    <property type="match status" value="1"/>
</dbReference>
<dbReference type="Gene3D" id="3.20.19.10">
    <property type="entry name" value="Aconitase, domain 4"/>
    <property type="match status" value="1"/>
</dbReference>
<dbReference type="HAMAP" id="MF_01032">
    <property type="entry name" value="LeuD_type2"/>
    <property type="match status" value="1"/>
</dbReference>
<dbReference type="InterPro" id="IPR015928">
    <property type="entry name" value="Aconitase/3IPM_dehydase_swvl"/>
</dbReference>
<dbReference type="InterPro" id="IPR000573">
    <property type="entry name" value="AconitaseA/IPMdHydase_ssu_swvl"/>
</dbReference>
<dbReference type="InterPro" id="IPR033940">
    <property type="entry name" value="IPMI_Swivel"/>
</dbReference>
<dbReference type="InterPro" id="IPR050075">
    <property type="entry name" value="LeuD"/>
</dbReference>
<dbReference type="InterPro" id="IPR011824">
    <property type="entry name" value="LeuD/DmdB_bac"/>
</dbReference>
<dbReference type="InterPro" id="IPR011827">
    <property type="entry name" value="LeuD_type2/HacB/DmdB"/>
</dbReference>
<dbReference type="NCBIfam" id="TIGR02084">
    <property type="entry name" value="leud"/>
    <property type="match status" value="1"/>
</dbReference>
<dbReference type="NCBIfam" id="TIGR02087">
    <property type="entry name" value="LEUD_arch"/>
    <property type="match status" value="1"/>
</dbReference>
<dbReference type="PANTHER" id="PTHR43345:SF2">
    <property type="entry name" value="3-ISOPROPYLMALATE DEHYDRATASE SMALL SUBUNIT 1"/>
    <property type="match status" value="1"/>
</dbReference>
<dbReference type="PANTHER" id="PTHR43345">
    <property type="entry name" value="3-ISOPROPYLMALATE DEHYDRATASE SMALL SUBUNIT 2-RELATED-RELATED"/>
    <property type="match status" value="1"/>
</dbReference>
<dbReference type="Pfam" id="PF00694">
    <property type="entry name" value="Aconitase_C"/>
    <property type="match status" value="1"/>
</dbReference>
<dbReference type="SUPFAM" id="SSF52016">
    <property type="entry name" value="LeuD/IlvD-like"/>
    <property type="match status" value="1"/>
</dbReference>
<comment type="function">
    <text evidence="1">Catalyzes the isomerization between 2-isopropylmalate and 3-isopropylmalate, via the formation of 2-isopropylmaleate.</text>
</comment>
<comment type="catalytic activity">
    <reaction evidence="1">
        <text>(2R,3S)-3-isopropylmalate = (2S)-2-isopropylmalate</text>
        <dbReference type="Rhea" id="RHEA:32287"/>
        <dbReference type="ChEBI" id="CHEBI:1178"/>
        <dbReference type="ChEBI" id="CHEBI:35121"/>
        <dbReference type="EC" id="4.2.1.33"/>
    </reaction>
</comment>
<comment type="pathway">
    <text evidence="1">Amino-acid biosynthesis; L-leucine biosynthesis; L-leucine from 3-methyl-2-oxobutanoate: step 2/4.</text>
</comment>
<comment type="subunit">
    <text evidence="1">Heterodimer of LeuC and LeuD.</text>
</comment>
<comment type="similarity">
    <text evidence="1">Belongs to the LeuD family. LeuD type 2 subfamily.</text>
</comment>
<keyword id="KW-0028">Amino-acid biosynthesis</keyword>
<keyword id="KW-0100">Branched-chain amino acid biosynthesis</keyword>
<keyword id="KW-0432">Leucine biosynthesis</keyword>
<keyword id="KW-0456">Lyase</keyword>
<keyword id="KW-1185">Reference proteome</keyword>
<name>LEUD_CLOD6</name>
<proteinExistence type="inferred from homology"/>
<evidence type="ECO:0000255" key="1">
    <source>
        <dbReference type="HAMAP-Rule" id="MF_01032"/>
    </source>
</evidence>
<protein>
    <recommendedName>
        <fullName evidence="1">3-isopropylmalate dehydratase small subunit</fullName>
        <ecNumber evidence="1">4.2.1.33</ecNumber>
    </recommendedName>
    <alternativeName>
        <fullName evidence="1">Alpha-IPM isomerase</fullName>
        <shortName evidence="1">IPMI</shortName>
    </alternativeName>
    <alternativeName>
        <fullName evidence="1">Isopropylmalate isomerase</fullName>
    </alternativeName>
</protein>
<organism>
    <name type="scientific">Clostridioides difficile (strain 630)</name>
    <name type="common">Peptoclostridium difficile</name>
    <dbReference type="NCBI Taxonomy" id="272563"/>
    <lineage>
        <taxon>Bacteria</taxon>
        <taxon>Bacillati</taxon>
        <taxon>Bacillota</taxon>
        <taxon>Clostridia</taxon>
        <taxon>Peptostreptococcales</taxon>
        <taxon>Peptostreptococcaceae</taxon>
        <taxon>Clostridioides</taxon>
    </lineage>
</organism>
<feature type="chain" id="PRO_1000072964" description="3-isopropylmalate dehydratase small subunit">
    <location>
        <begin position="1"/>
        <end position="163"/>
    </location>
</feature>
<accession>Q18AJ1</accession>
<gene>
    <name evidence="1" type="primary">leuD</name>
    <name type="ordered locus">CD630_09910</name>
</gene>
<sequence length="163" mass="17965">MIANGSVFKFGDNIDTDVIIPARYLNIADYKELATHCMEDIDDKFISKVKKGDIIVATKNFGCGSSREHAPIVIKESGVSCVIASTFARIFFRNSINIGLPILECEEAANNIDEGDNIEVDFSTGVIKNITKGKEYKAEPFPEFMQNIILNEGLINSIKANRG</sequence>